<gene>
    <name evidence="1" type="primary">atpH</name>
    <name type="synonym">atpE</name>
    <name type="ordered locus">SMU_1531</name>
</gene>
<comment type="function">
    <text evidence="1">F(1)F(0) ATP synthase produces ATP from ADP in the presence of a proton or sodium gradient. F-type ATPases consist of two structural domains, F(1) containing the extramembraneous catalytic core and F(0) containing the membrane proton channel, linked together by a central stalk and a peripheral stalk. During catalysis, ATP synthesis in the catalytic domain of F(1) is coupled via a rotary mechanism of the central stalk subunits to proton translocation.</text>
</comment>
<comment type="function">
    <text evidence="1">This protein is part of the stalk that links CF(0) to CF(1). It either transmits conformational changes from CF(0) to CF(1) or is implicated in proton conduction.</text>
</comment>
<comment type="subunit">
    <text evidence="1">F-type ATPases have 2 components, F(1) - the catalytic core - and F(0) - the membrane proton channel. F(1) has five subunits: alpha(3), beta(3), gamma(1), delta(1), epsilon(1). F(0) has three main subunits: a(1), b(2) and c(10-14). The alpha and beta chains form an alternating ring which encloses part of the gamma chain. F(1) is attached to F(0) by a central stalk formed by the gamma and epsilon chains, while a peripheral stalk is formed by the delta and b chains.</text>
</comment>
<comment type="subcellular location">
    <subcellularLocation>
        <location evidence="1">Cell membrane</location>
        <topology evidence="1">Peripheral membrane protein</topology>
    </subcellularLocation>
</comment>
<comment type="similarity">
    <text evidence="1">Belongs to the ATPase delta chain family.</text>
</comment>
<feature type="chain" id="PRO_0000193490" description="ATP synthase subunit delta">
    <location>
        <begin position="1"/>
        <end position="178"/>
    </location>
</feature>
<feature type="sequence conflict" description="In Ref. 1; AAD13380." evidence="2" ref="1">
    <original>S</original>
    <variation>A</variation>
    <location>
        <position position="60"/>
    </location>
</feature>
<feature type="sequence conflict" description="In Ref. 1; AAD13380." evidence="2" ref="1">
    <location>
        <position position="155"/>
    </location>
</feature>
<protein>
    <recommendedName>
        <fullName evidence="1">ATP synthase subunit delta</fullName>
    </recommendedName>
    <alternativeName>
        <fullName evidence="1">ATP synthase F(1) sector subunit delta</fullName>
    </alternativeName>
    <alternativeName>
        <fullName evidence="1">F-type ATPase subunit delta</fullName>
        <shortName evidence="1">F-ATPase subunit delta</shortName>
    </alternativeName>
</protein>
<evidence type="ECO:0000255" key="1">
    <source>
        <dbReference type="HAMAP-Rule" id="MF_01416"/>
    </source>
</evidence>
<evidence type="ECO:0000305" key="2"/>
<reference key="1">
    <citation type="journal article" date="1996" name="Gene">
        <title>Cloning and nucleotide sequence analysis of the Streptococcus mutans membrane-bound, proton-translocating ATPase operon.</title>
        <authorList>
            <person name="Smith A.J."/>
            <person name="Quivey R.G."/>
            <person name="Faustoferri R.C."/>
        </authorList>
    </citation>
    <scope>NUCLEOTIDE SEQUENCE [GENOMIC DNA]</scope>
    <source>
        <strain>GS-5</strain>
    </source>
</reference>
<reference key="2">
    <citation type="journal article" date="2002" name="Proc. Natl. Acad. Sci. U.S.A.">
        <title>Genome sequence of Streptococcus mutans UA159, a cariogenic dental pathogen.</title>
        <authorList>
            <person name="Ajdic D.J."/>
            <person name="McShan W.M."/>
            <person name="McLaughlin R.E."/>
            <person name="Savic G."/>
            <person name="Chang J."/>
            <person name="Carson M.B."/>
            <person name="Primeaux C."/>
            <person name="Tian R."/>
            <person name="Kenton S."/>
            <person name="Jia H.G."/>
            <person name="Lin S.P."/>
            <person name="Qian Y."/>
            <person name="Li S."/>
            <person name="Zhu H."/>
            <person name="Najar F.Z."/>
            <person name="Lai H."/>
            <person name="White J."/>
            <person name="Roe B.A."/>
            <person name="Ferretti J.J."/>
        </authorList>
    </citation>
    <scope>NUCLEOTIDE SEQUENCE [LARGE SCALE GENOMIC DNA]</scope>
    <source>
        <strain>ATCC 700610 / UA159</strain>
    </source>
</reference>
<sequence>MDKKTQAVTEIYAKSLVEVALERDSVPIIYDEVRAILSVLDDQQVQDFLASKAIDLSAKSEVVRLFQESCSNYMKQFLEIILQNERQQLLYLIMKEVLKELSLKTHIFDIEVTTAVALSDDQKERLTALVEKKFALTKRNLIEKIDDEIIGGFIIKANNKVIDTSIRSQLQELKMNLK</sequence>
<accession>P95786</accession>
<dbReference type="EMBL" id="U31170">
    <property type="protein sequence ID" value="AAD13380.1"/>
    <property type="molecule type" value="Genomic_DNA"/>
</dbReference>
<dbReference type="EMBL" id="AE014133">
    <property type="protein sequence ID" value="AAN59181.1"/>
    <property type="molecule type" value="Genomic_DNA"/>
</dbReference>
<dbReference type="PIR" id="JC5738">
    <property type="entry name" value="JC5738"/>
</dbReference>
<dbReference type="RefSeq" id="NP_721875.1">
    <property type="nucleotide sequence ID" value="NC_004350.2"/>
</dbReference>
<dbReference type="RefSeq" id="WP_002262943.1">
    <property type="nucleotide sequence ID" value="NC_004350.2"/>
</dbReference>
<dbReference type="SMR" id="P95786"/>
<dbReference type="STRING" id="210007.SMU_1531"/>
<dbReference type="KEGG" id="smu:SMU_1531"/>
<dbReference type="PATRIC" id="fig|210007.7.peg.1363"/>
<dbReference type="eggNOG" id="COG0712">
    <property type="taxonomic scope" value="Bacteria"/>
</dbReference>
<dbReference type="HOGENOM" id="CLU_085114_1_2_9"/>
<dbReference type="OrthoDB" id="9802471at2"/>
<dbReference type="PhylomeDB" id="P95786"/>
<dbReference type="SABIO-RK" id="P95786"/>
<dbReference type="Proteomes" id="UP000002512">
    <property type="component" value="Chromosome"/>
</dbReference>
<dbReference type="GO" id="GO:0005886">
    <property type="term" value="C:plasma membrane"/>
    <property type="evidence" value="ECO:0007669"/>
    <property type="project" value="UniProtKB-SubCell"/>
</dbReference>
<dbReference type="GO" id="GO:0045259">
    <property type="term" value="C:proton-transporting ATP synthase complex"/>
    <property type="evidence" value="ECO:0007669"/>
    <property type="project" value="UniProtKB-KW"/>
</dbReference>
<dbReference type="GO" id="GO:0046933">
    <property type="term" value="F:proton-transporting ATP synthase activity, rotational mechanism"/>
    <property type="evidence" value="ECO:0007669"/>
    <property type="project" value="UniProtKB-UniRule"/>
</dbReference>
<dbReference type="Gene3D" id="1.10.520.20">
    <property type="entry name" value="N-terminal domain of the delta subunit of the F1F0-ATP synthase"/>
    <property type="match status" value="1"/>
</dbReference>
<dbReference type="HAMAP" id="MF_01416">
    <property type="entry name" value="ATP_synth_delta_bact"/>
    <property type="match status" value="1"/>
</dbReference>
<dbReference type="InterPro" id="IPR026015">
    <property type="entry name" value="ATP_synth_OSCP/delta_N_sf"/>
</dbReference>
<dbReference type="InterPro" id="IPR000711">
    <property type="entry name" value="ATPase_OSCP/dsu"/>
</dbReference>
<dbReference type="NCBIfam" id="TIGR01145">
    <property type="entry name" value="ATP_synt_delta"/>
    <property type="match status" value="1"/>
</dbReference>
<dbReference type="NCBIfam" id="NF004401">
    <property type="entry name" value="PRK05758.2-1"/>
    <property type="match status" value="1"/>
</dbReference>
<dbReference type="PANTHER" id="PTHR11910">
    <property type="entry name" value="ATP SYNTHASE DELTA CHAIN"/>
    <property type="match status" value="1"/>
</dbReference>
<dbReference type="Pfam" id="PF00213">
    <property type="entry name" value="OSCP"/>
    <property type="match status" value="1"/>
</dbReference>
<dbReference type="PRINTS" id="PR00125">
    <property type="entry name" value="ATPASEDELTA"/>
</dbReference>
<dbReference type="SUPFAM" id="SSF47928">
    <property type="entry name" value="N-terminal domain of the delta subunit of the F1F0-ATP synthase"/>
    <property type="match status" value="1"/>
</dbReference>
<keyword id="KW-0066">ATP synthesis</keyword>
<keyword id="KW-1003">Cell membrane</keyword>
<keyword id="KW-0139">CF(1)</keyword>
<keyword id="KW-0375">Hydrogen ion transport</keyword>
<keyword id="KW-0406">Ion transport</keyword>
<keyword id="KW-0472">Membrane</keyword>
<keyword id="KW-1185">Reference proteome</keyword>
<keyword id="KW-0813">Transport</keyword>
<name>ATPD_STRMU</name>
<proteinExistence type="inferred from homology"/>
<organism>
    <name type="scientific">Streptococcus mutans serotype c (strain ATCC 700610 / UA159)</name>
    <dbReference type="NCBI Taxonomy" id="210007"/>
    <lineage>
        <taxon>Bacteria</taxon>
        <taxon>Bacillati</taxon>
        <taxon>Bacillota</taxon>
        <taxon>Bacilli</taxon>
        <taxon>Lactobacillales</taxon>
        <taxon>Streptococcaceae</taxon>
        <taxon>Streptococcus</taxon>
    </lineage>
</organism>